<gene>
    <name type="primary">rps15</name>
    <name type="ordered locus">Poptr_cp086</name>
</gene>
<proteinExistence type="inferred from homology"/>
<dbReference type="EMBL" id="EF489041">
    <property type="protein sequence ID" value="ABO36768.1"/>
    <property type="molecule type" value="Genomic_DNA"/>
</dbReference>
<dbReference type="RefSeq" id="YP_001109564.1">
    <property type="nucleotide sequence ID" value="NC_009143.1"/>
</dbReference>
<dbReference type="SMR" id="A4GYX3"/>
<dbReference type="FunCoup" id="A4GYX3">
    <property type="interactions" value="225"/>
</dbReference>
<dbReference type="STRING" id="3694.A4GYX3"/>
<dbReference type="GeneID" id="4929747"/>
<dbReference type="KEGG" id="pop:4929747"/>
<dbReference type="InParanoid" id="A4GYX3"/>
<dbReference type="OrthoDB" id="441444at2759"/>
<dbReference type="Proteomes" id="UP000006729">
    <property type="component" value="Chloroplast"/>
</dbReference>
<dbReference type="GO" id="GO:0009507">
    <property type="term" value="C:chloroplast"/>
    <property type="evidence" value="ECO:0007669"/>
    <property type="project" value="UniProtKB-SubCell"/>
</dbReference>
<dbReference type="GO" id="GO:1990904">
    <property type="term" value="C:ribonucleoprotein complex"/>
    <property type="evidence" value="ECO:0007669"/>
    <property type="project" value="UniProtKB-KW"/>
</dbReference>
<dbReference type="GO" id="GO:0005840">
    <property type="term" value="C:ribosome"/>
    <property type="evidence" value="ECO:0007669"/>
    <property type="project" value="UniProtKB-KW"/>
</dbReference>
<dbReference type="GO" id="GO:0003735">
    <property type="term" value="F:structural constituent of ribosome"/>
    <property type="evidence" value="ECO:0007669"/>
    <property type="project" value="InterPro"/>
</dbReference>
<dbReference type="GO" id="GO:0006412">
    <property type="term" value="P:translation"/>
    <property type="evidence" value="ECO:0007669"/>
    <property type="project" value="UniProtKB-UniRule"/>
</dbReference>
<dbReference type="CDD" id="cd00353">
    <property type="entry name" value="Ribosomal_S15p_S13e"/>
    <property type="match status" value="1"/>
</dbReference>
<dbReference type="Gene3D" id="1.10.287.10">
    <property type="entry name" value="S15/NS1, RNA-binding"/>
    <property type="match status" value="1"/>
</dbReference>
<dbReference type="HAMAP" id="MF_01343_B">
    <property type="entry name" value="Ribosomal_uS15_B"/>
    <property type="match status" value="1"/>
</dbReference>
<dbReference type="InterPro" id="IPR000589">
    <property type="entry name" value="Ribosomal_uS15"/>
</dbReference>
<dbReference type="InterPro" id="IPR005290">
    <property type="entry name" value="Ribosomal_uS15_bac-type"/>
</dbReference>
<dbReference type="InterPro" id="IPR009068">
    <property type="entry name" value="uS15_NS1_RNA-bd_sf"/>
</dbReference>
<dbReference type="NCBIfam" id="TIGR00952">
    <property type="entry name" value="S15_bact"/>
    <property type="match status" value="1"/>
</dbReference>
<dbReference type="PANTHER" id="PTHR23321">
    <property type="entry name" value="RIBOSOMAL PROTEIN S15, BACTERIAL AND ORGANELLAR"/>
    <property type="match status" value="1"/>
</dbReference>
<dbReference type="PANTHER" id="PTHR23321:SF26">
    <property type="entry name" value="SMALL RIBOSOMAL SUBUNIT PROTEIN US15M"/>
    <property type="match status" value="1"/>
</dbReference>
<dbReference type="Pfam" id="PF00312">
    <property type="entry name" value="Ribosomal_S15"/>
    <property type="match status" value="1"/>
</dbReference>
<dbReference type="SMART" id="SM01387">
    <property type="entry name" value="Ribosomal_S15"/>
    <property type="match status" value="1"/>
</dbReference>
<dbReference type="SUPFAM" id="SSF47060">
    <property type="entry name" value="S15/NS1 RNA-binding domain"/>
    <property type="match status" value="1"/>
</dbReference>
<dbReference type="PROSITE" id="PS00362">
    <property type="entry name" value="RIBOSOMAL_S15"/>
    <property type="match status" value="1"/>
</dbReference>
<name>RR15_POPTR</name>
<geneLocation type="chloroplast"/>
<comment type="subunit">
    <text evidence="1">Part of the 30S ribosomal subunit.</text>
</comment>
<comment type="subcellular location">
    <subcellularLocation>
        <location>Plastid</location>
        <location>Chloroplast</location>
    </subcellularLocation>
</comment>
<comment type="similarity">
    <text evidence="2">Belongs to the universal ribosomal protein uS15 family.</text>
</comment>
<sequence length="90" mass="10663">MVKSSFISIISQEDKKENKGSVEFQIVSFTNKIRRLTSHLELHRKDYLSQRGLRKILGKRQRLLSYLAKKNGVRYKELISQLNIRESKTR</sequence>
<keyword id="KW-0150">Chloroplast</keyword>
<keyword id="KW-0934">Plastid</keyword>
<keyword id="KW-1185">Reference proteome</keyword>
<keyword id="KW-0687">Ribonucleoprotein</keyword>
<keyword id="KW-0689">Ribosomal protein</keyword>
<accession>A4GYX3</accession>
<protein>
    <recommendedName>
        <fullName evidence="2">Small ribosomal subunit protein uS15c</fullName>
    </recommendedName>
    <alternativeName>
        <fullName>30S ribosomal protein S15, chloroplastic</fullName>
    </alternativeName>
</protein>
<organism>
    <name type="scientific">Populus trichocarpa</name>
    <name type="common">Western balsam poplar</name>
    <name type="synonym">Populus balsamifera subsp. trichocarpa</name>
    <dbReference type="NCBI Taxonomy" id="3694"/>
    <lineage>
        <taxon>Eukaryota</taxon>
        <taxon>Viridiplantae</taxon>
        <taxon>Streptophyta</taxon>
        <taxon>Embryophyta</taxon>
        <taxon>Tracheophyta</taxon>
        <taxon>Spermatophyta</taxon>
        <taxon>Magnoliopsida</taxon>
        <taxon>eudicotyledons</taxon>
        <taxon>Gunneridae</taxon>
        <taxon>Pentapetalae</taxon>
        <taxon>rosids</taxon>
        <taxon>fabids</taxon>
        <taxon>Malpighiales</taxon>
        <taxon>Salicaceae</taxon>
        <taxon>Saliceae</taxon>
        <taxon>Populus</taxon>
    </lineage>
</organism>
<evidence type="ECO:0000250" key="1"/>
<evidence type="ECO:0000305" key="2"/>
<reference key="1">
    <citation type="journal article" date="2006" name="Science">
        <title>The genome of black cottonwood, Populus trichocarpa (Torr. &amp; Gray).</title>
        <authorList>
            <person name="Tuskan G.A."/>
            <person name="Difazio S."/>
            <person name="Jansson S."/>
            <person name="Bohlmann J."/>
            <person name="Grigoriev I."/>
            <person name="Hellsten U."/>
            <person name="Putnam N."/>
            <person name="Ralph S."/>
            <person name="Rombauts S."/>
            <person name="Salamov A."/>
            <person name="Schein J."/>
            <person name="Sterck L."/>
            <person name="Aerts A."/>
            <person name="Bhalerao R.R."/>
            <person name="Bhalerao R.P."/>
            <person name="Blaudez D."/>
            <person name="Boerjan W."/>
            <person name="Brun A."/>
            <person name="Brunner A."/>
            <person name="Busov V."/>
            <person name="Campbell M."/>
            <person name="Carlson J."/>
            <person name="Chalot M."/>
            <person name="Chapman J."/>
            <person name="Chen G.-L."/>
            <person name="Cooper D."/>
            <person name="Coutinho P.M."/>
            <person name="Couturier J."/>
            <person name="Covert S."/>
            <person name="Cronk Q."/>
            <person name="Cunningham R."/>
            <person name="Davis J."/>
            <person name="Degroeve S."/>
            <person name="Dejardin A."/>
            <person name="dePamphilis C.W."/>
            <person name="Detter J."/>
            <person name="Dirks B."/>
            <person name="Dubchak I."/>
            <person name="Duplessis S."/>
            <person name="Ehlting J."/>
            <person name="Ellis B."/>
            <person name="Gendler K."/>
            <person name="Goodstein D."/>
            <person name="Gribskov M."/>
            <person name="Grimwood J."/>
            <person name="Groover A."/>
            <person name="Gunter L."/>
            <person name="Hamberger B."/>
            <person name="Heinze B."/>
            <person name="Helariutta Y."/>
            <person name="Henrissat B."/>
            <person name="Holligan D."/>
            <person name="Holt R."/>
            <person name="Huang W."/>
            <person name="Islam-Faridi N."/>
            <person name="Jones S."/>
            <person name="Jones-Rhoades M."/>
            <person name="Jorgensen R."/>
            <person name="Joshi C."/>
            <person name="Kangasjaervi J."/>
            <person name="Karlsson J."/>
            <person name="Kelleher C."/>
            <person name="Kirkpatrick R."/>
            <person name="Kirst M."/>
            <person name="Kohler A."/>
            <person name="Kalluri U."/>
            <person name="Larimer F."/>
            <person name="Leebens-Mack J."/>
            <person name="Leple J.-C."/>
            <person name="Locascio P."/>
            <person name="Lou Y."/>
            <person name="Lucas S."/>
            <person name="Martin F."/>
            <person name="Montanini B."/>
            <person name="Napoli C."/>
            <person name="Nelson D.R."/>
            <person name="Nelson C."/>
            <person name="Nieminen K."/>
            <person name="Nilsson O."/>
            <person name="Pereda V."/>
            <person name="Peter G."/>
            <person name="Philippe R."/>
            <person name="Pilate G."/>
            <person name="Poliakov A."/>
            <person name="Razumovskaya J."/>
            <person name="Richardson P."/>
            <person name="Rinaldi C."/>
            <person name="Ritland K."/>
            <person name="Rouze P."/>
            <person name="Ryaboy D."/>
            <person name="Schmutz J."/>
            <person name="Schrader J."/>
            <person name="Segerman B."/>
            <person name="Shin H."/>
            <person name="Siddiqui A."/>
            <person name="Sterky F."/>
            <person name="Terry A."/>
            <person name="Tsai C.-J."/>
            <person name="Uberbacher E."/>
            <person name="Unneberg P."/>
            <person name="Vahala J."/>
            <person name="Wall K."/>
            <person name="Wessler S."/>
            <person name="Yang G."/>
            <person name="Yin T."/>
            <person name="Douglas C."/>
            <person name="Marra M."/>
            <person name="Sandberg G."/>
            <person name="Van de Peer Y."/>
            <person name="Rokhsar D.S."/>
        </authorList>
    </citation>
    <scope>NUCLEOTIDE SEQUENCE [LARGE SCALE GENOMIC DNA]</scope>
    <source>
        <strain>cv. Nisqually</strain>
    </source>
</reference>
<feature type="chain" id="PRO_0000354277" description="Small ribosomal subunit protein uS15c">
    <location>
        <begin position="1"/>
        <end position="90"/>
    </location>
</feature>